<dbReference type="EC" id="2.1.1.192" evidence="1"/>
<dbReference type="EMBL" id="CP000920">
    <property type="protein sequence ID" value="ACO20318.1"/>
    <property type="molecule type" value="Genomic_DNA"/>
</dbReference>
<dbReference type="RefSeq" id="WP_000804649.1">
    <property type="nucleotide sequence ID" value="NC_012467.1"/>
</dbReference>
<dbReference type="SMR" id="C1CJL5"/>
<dbReference type="KEGG" id="spp:SPP_0777"/>
<dbReference type="HOGENOM" id="CLU_029101_0_1_9"/>
<dbReference type="GO" id="GO:0005737">
    <property type="term" value="C:cytoplasm"/>
    <property type="evidence" value="ECO:0007669"/>
    <property type="project" value="UniProtKB-SubCell"/>
</dbReference>
<dbReference type="GO" id="GO:0051539">
    <property type="term" value="F:4 iron, 4 sulfur cluster binding"/>
    <property type="evidence" value="ECO:0007669"/>
    <property type="project" value="UniProtKB-UniRule"/>
</dbReference>
<dbReference type="GO" id="GO:0046872">
    <property type="term" value="F:metal ion binding"/>
    <property type="evidence" value="ECO:0007669"/>
    <property type="project" value="UniProtKB-KW"/>
</dbReference>
<dbReference type="GO" id="GO:0070040">
    <property type="term" value="F:rRNA (adenine(2503)-C2-)-methyltransferase activity"/>
    <property type="evidence" value="ECO:0007669"/>
    <property type="project" value="UniProtKB-UniRule"/>
</dbReference>
<dbReference type="GO" id="GO:0019843">
    <property type="term" value="F:rRNA binding"/>
    <property type="evidence" value="ECO:0007669"/>
    <property type="project" value="UniProtKB-UniRule"/>
</dbReference>
<dbReference type="GO" id="GO:0002935">
    <property type="term" value="F:tRNA (adenine(37)-C2)-methyltransferase activity"/>
    <property type="evidence" value="ECO:0007669"/>
    <property type="project" value="UniProtKB-UniRule"/>
</dbReference>
<dbReference type="GO" id="GO:0000049">
    <property type="term" value="F:tRNA binding"/>
    <property type="evidence" value="ECO:0007669"/>
    <property type="project" value="UniProtKB-UniRule"/>
</dbReference>
<dbReference type="GO" id="GO:0070475">
    <property type="term" value="P:rRNA base methylation"/>
    <property type="evidence" value="ECO:0007669"/>
    <property type="project" value="UniProtKB-UniRule"/>
</dbReference>
<dbReference type="GO" id="GO:0030488">
    <property type="term" value="P:tRNA methylation"/>
    <property type="evidence" value="ECO:0007669"/>
    <property type="project" value="UniProtKB-UniRule"/>
</dbReference>
<dbReference type="CDD" id="cd01335">
    <property type="entry name" value="Radical_SAM"/>
    <property type="match status" value="1"/>
</dbReference>
<dbReference type="FunFam" id="1.10.150.530:FF:000002">
    <property type="entry name" value="Probable dual-specificity RNA methyltransferase RlmN"/>
    <property type="match status" value="1"/>
</dbReference>
<dbReference type="FunFam" id="3.20.20.70:FF:000014">
    <property type="entry name" value="Probable dual-specificity RNA methyltransferase RlmN"/>
    <property type="match status" value="1"/>
</dbReference>
<dbReference type="Gene3D" id="1.10.150.530">
    <property type="match status" value="1"/>
</dbReference>
<dbReference type="Gene3D" id="3.20.20.70">
    <property type="entry name" value="Aldolase class I"/>
    <property type="match status" value="1"/>
</dbReference>
<dbReference type="HAMAP" id="MF_01849">
    <property type="entry name" value="RNA_methyltr_RlmN"/>
    <property type="match status" value="1"/>
</dbReference>
<dbReference type="InterPro" id="IPR013785">
    <property type="entry name" value="Aldolase_TIM"/>
</dbReference>
<dbReference type="InterPro" id="IPR040072">
    <property type="entry name" value="Methyltransferase_A"/>
</dbReference>
<dbReference type="InterPro" id="IPR048641">
    <property type="entry name" value="RlmN_N"/>
</dbReference>
<dbReference type="InterPro" id="IPR027492">
    <property type="entry name" value="RNA_MTrfase_RlmN"/>
</dbReference>
<dbReference type="InterPro" id="IPR004383">
    <property type="entry name" value="rRNA_lsu_MTrfase_RlmN/Cfr"/>
</dbReference>
<dbReference type="InterPro" id="IPR007197">
    <property type="entry name" value="rSAM"/>
</dbReference>
<dbReference type="NCBIfam" id="TIGR00048">
    <property type="entry name" value="rRNA_mod_RlmN"/>
    <property type="match status" value="1"/>
</dbReference>
<dbReference type="PANTHER" id="PTHR30544">
    <property type="entry name" value="23S RRNA METHYLTRANSFERASE"/>
    <property type="match status" value="1"/>
</dbReference>
<dbReference type="PANTHER" id="PTHR30544:SF5">
    <property type="entry name" value="RADICAL SAM CORE DOMAIN-CONTAINING PROTEIN"/>
    <property type="match status" value="1"/>
</dbReference>
<dbReference type="Pfam" id="PF04055">
    <property type="entry name" value="Radical_SAM"/>
    <property type="match status" value="1"/>
</dbReference>
<dbReference type="Pfam" id="PF21016">
    <property type="entry name" value="RlmN_N"/>
    <property type="match status" value="1"/>
</dbReference>
<dbReference type="PIRSF" id="PIRSF006004">
    <property type="entry name" value="CHP00048"/>
    <property type="match status" value="1"/>
</dbReference>
<dbReference type="SFLD" id="SFLDF00275">
    <property type="entry name" value="adenosine_C2_methyltransferase"/>
    <property type="match status" value="1"/>
</dbReference>
<dbReference type="SFLD" id="SFLDS00029">
    <property type="entry name" value="Radical_SAM"/>
    <property type="match status" value="1"/>
</dbReference>
<dbReference type="SUPFAM" id="SSF102114">
    <property type="entry name" value="Radical SAM enzymes"/>
    <property type="match status" value="1"/>
</dbReference>
<dbReference type="PROSITE" id="PS51918">
    <property type="entry name" value="RADICAL_SAM"/>
    <property type="match status" value="1"/>
</dbReference>
<protein>
    <recommendedName>
        <fullName evidence="1">Probable dual-specificity RNA methyltransferase RlmN</fullName>
        <ecNumber evidence="1">2.1.1.192</ecNumber>
    </recommendedName>
    <alternativeName>
        <fullName evidence="1">23S rRNA (adenine(2503)-C(2))-methyltransferase</fullName>
    </alternativeName>
    <alternativeName>
        <fullName evidence="1">23S rRNA m2A2503 methyltransferase</fullName>
    </alternativeName>
    <alternativeName>
        <fullName evidence="1">Ribosomal RNA large subunit methyltransferase N</fullName>
    </alternativeName>
    <alternativeName>
        <fullName evidence="1">tRNA (adenine(37)-C(2))-methyltransferase</fullName>
    </alternativeName>
    <alternativeName>
        <fullName evidence="1">tRNA m2A37 methyltransferase</fullName>
    </alternativeName>
</protein>
<gene>
    <name evidence="1" type="primary">rlmN</name>
    <name type="ordered locus">SPP_0777</name>
</gene>
<comment type="function">
    <text evidence="1">Specifically methylates position 2 of adenine 2503 in 23S rRNA and position 2 of adenine 37 in tRNAs.</text>
</comment>
<comment type="catalytic activity">
    <reaction evidence="1">
        <text>adenosine(2503) in 23S rRNA + 2 reduced [2Fe-2S]-[ferredoxin] + 2 S-adenosyl-L-methionine = 2-methyladenosine(2503) in 23S rRNA + 5'-deoxyadenosine + L-methionine + 2 oxidized [2Fe-2S]-[ferredoxin] + S-adenosyl-L-homocysteine</text>
        <dbReference type="Rhea" id="RHEA:42916"/>
        <dbReference type="Rhea" id="RHEA-COMP:10000"/>
        <dbReference type="Rhea" id="RHEA-COMP:10001"/>
        <dbReference type="Rhea" id="RHEA-COMP:10152"/>
        <dbReference type="Rhea" id="RHEA-COMP:10282"/>
        <dbReference type="ChEBI" id="CHEBI:17319"/>
        <dbReference type="ChEBI" id="CHEBI:33737"/>
        <dbReference type="ChEBI" id="CHEBI:33738"/>
        <dbReference type="ChEBI" id="CHEBI:57844"/>
        <dbReference type="ChEBI" id="CHEBI:57856"/>
        <dbReference type="ChEBI" id="CHEBI:59789"/>
        <dbReference type="ChEBI" id="CHEBI:74411"/>
        <dbReference type="ChEBI" id="CHEBI:74497"/>
        <dbReference type="EC" id="2.1.1.192"/>
    </reaction>
</comment>
<comment type="catalytic activity">
    <reaction evidence="1">
        <text>adenosine(37) in tRNA + 2 reduced [2Fe-2S]-[ferredoxin] + 2 S-adenosyl-L-methionine = 2-methyladenosine(37) in tRNA + 5'-deoxyadenosine + L-methionine + 2 oxidized [2Fe-2S]-[ferredoxin] + S-adenosyl-L-homocysteine</text>
        <dbReference type="Rhea" id="RHEA:43332"/>
        <dbReference type="Rhea" id="RHEA-COMP:10000"/>
        <dbReference type="Rhea" id="RHEA-COMP:10001"/>
        <dbReference type="Rhea" id="RHEA-COMP:10162"/>
        <dbReference type="Rhea" id="RHEA-COMP:10485"/>
        <dbReference type="ChEBI" id="CHEBI:17319"/>
        <dbReference type="ChEBI" id="CHEBI:33737"/>
        <dbReference type="ChEBI" id="CHEBI:33738"/>
        <dbReference type="ChEBI" id="CHEBI:57844"/>
        <dbReference type="ChEBI" id="CHEBI:57856"/>
        <dbReference type="ChEBI" id="CHEBI:59789"/>
        <dbReference type="ChEBI" id="CHEBI:74411"/>
        <dbReference type="ChEBI" id="CHEBI:74497"/>
        <dbReference type="EC" id="2.1.1.192"/>
    </reaction>
</comment>
<comment type="cofactor">
    <cofactor evidence="1">
        <name>[4Fe-4S] cluster</name>
        <dbReference type="ChEBI" id="CHEBI:49883"/>
    </cofactor>
    <text evidence="1">Binds 1 [4Fe-4S] cluster. The cluster is coordinated with 3 cysteines and an exchangeable S-adenosyl-L-methionine.</text>
</comment>
<comment type="subcellular location">
    <subcellularLocation>
        <location evidence="1">Cytoplasm</location>
    </subcellularLocation>
</comment>
<comment type="miscellaneous">
    <text evidence="1">Reaction proceeds by a ping-pong mechanism involving intermediate methylation of a conserved cysteine residue.</text>
</comment>
<comment type="similarity">
    <text evidence="1">Belongs to the radical SAM superfamily. RlmN family.</text>
</comment>
<reference key="1">
    <citation type="journal article" date="2010" name="Genome Biol.">
        <title>Structure and dynamics of the pan-genome of Streptococcus pneumoniae and closely related species.</title>
        <authorList>
            <person name="Donati C."/>
            <person name="Hiller N.L."/>
            <person name="Tettelin H."/>
            <person name="Muzzi A."/>
            <person name="Croucher N.J."/>
            <person name="Angiuoli S.V."/>
            <person name="Oggioni M."/>
            <person name="Dunning Hotopp J.C."/>
            <person name="Hu F.Z."/>
            <person name="Riley D.R."/>
            <person name="Covacci A."/>
            <person name="Mitchell T.J."/>
            <person name="Bentley S.D."/>
            <person name="Kilian M."/>
            <person name="Ehrlich G.D."/>
            <person name="Rappuoli R."/>
            <person name="Moxon E.R."/>
            <person name="Masignani V."/>
        </authorList>
    </citation>
    <scope>NUCLEOTIDE SEQUENCE [LARGE SCALE GENOMIC DNA]</scope>
    <source>
        <strain>P1031</strain>
    </source>
</reference>
<organism>
    <name type="scientific">Streptococcus pneumoniae (strain P1031)</name>
    <dbReference type="NCBI Taxonomy" id="488223"/>
    <lineage>
        <taxon>Bacteria</taxon>
        <taxon>Bacillati</taxon>
        <taxon>Bacillota</taxon>
        <taxon>Bacilli</taxon>
        <taxon>Lactobacillales</taxon>
        <taxon>Streptococcaceae</taxon>
        <taxon>Streptococcus</taxon>
    </lineage>
</organism>
<evidence type="ECO:0000255" key="1">
    <source>
        <dbReference type="HAMAP-Rule" id="MF_01849"/>
    </source>
</evidence>
<evidence type="ECO:0000255" key="2">
    <source>
        <dbReference type="PROSITE-ProRule" id="PRU01266"/>
    </source>
</evidence>
<proteinExistence type="inferred from homology"/>
<accession>C1CJL5</accession>
<name>RLMN_STRZP</name>
<feature type="chain" id="PRO_1000188615" description="Probable dual-specificity RNA methyltransferase RlmN">
    <location>
        <begin position="1"/>
        <end position="361"/>
    </location>
</feature>
<feature type="domain" description="Radical SAM core" evidence="2">
    <location>
        <begin position="97"/>
        <end position="329"/>
    </location>
</feature>
<feature type="active site" description="Proton acceptor" evidence="1">
    <location>
        <position position="91"/>
    </location>
</feature>
<feature type="active site" description="S-methylcysteine intermediate" evidence="1">
    <location>
        <position position="340"/>
    </location>
</feature>
<feature type="binding site" evidence="1">
    <location>
        <position position="111"/>
    </location>
    <ligand>
        <name>[4Fe-4S] cluster</name>
        <dbReference type="ChEBI" id="CHEBI:49883"/>
        <note>4Fe-4S-S-AdoMet</note>
    </ligand>
</feature>
<feature type="binding site" evidence="1">
    <location>
        <position position="115"/>
    </location>
    <ligand>
        <name>[4Fe-4S] cluster</name>
        <dbReference type="ChEBI" id="CHEBI:49883"/>
        <note>4Fe-4S-S-AdoMet</note>
    </ligand>
</feature>
<feature type="binding site" evidence="1">
    <location>
        <position position="118"/>
    </location>
    <ligand>
        <name>[4Fe-4S] cluster</name>
        <dbReference type="ChEBI" id="CHEBI:49883"/>
        <note>4Fe-4S-S-AdoMet</note>
    </ligand>
</feature>
<feature type="binding site" evidence="1">
    <location>
        <begin position="163"/>
        <end position="164"/>
    </location>
    <ligand>
        <name>S-adenosyl-L-methionine</name>
        <dbReference type="ChEBI" id="CHEBI:59789"/>
    </ligand>
</feature>
<feature type="binding site" evidence="1">
    <location>
        <position position="195"/>
    </location>
    <ligand>
        <name>S-adenosyl-L-methionine</name>
        <dbReference type="ChEBI" id="CHEBI:59789"/>
    </ligand>
</feature>
<feature type="binding site" evidence="1">
    <location>
        <begin position="218"/>
        <end position="220"/>
    </location>
    <ligand>
        <name>S-adenosyl-L-methionine</name>
        <dbReference type="ChEBI" id="CHEBI:59789"/>
    </ligand>
</feature>
<feature type="binding site" evidence="1">
    <location>
        <position position="296"/>
    </location>
    <ligand>
        <name>S-adenosyl-L-methionine</name>
        <dbReference type="ChEBI" id="CHEBI:59789"/>
    </ligand>
</feature>
<feature type="disulfide bond" description="(transient)" evidence="1">
    <location>
        <begin position="104"/>
        <end position="340"/>
    </location>
</feature>
<keyword id="KW-0004">4Fe-4S</keyword>
<keyword id="KW-0963">Cytoplasm</keyword>
<keyword id="KW-1015">Disulfide bond</keyword>
<keyword id="KW-0408">Iron</keyword>
<keyword id="KW-0411">Iron-sulfur</keyword>
<keyword id="KW-0479">Metal-binding</keyword>
<keyword id="KW-0489">Methyltransferase</keyword>
<keyword id="KW-0698">rRNA processing</keyword>
<keyword id="KW-0949">S-adenosyl-L-methionine</keyword>
<keyword id="KW-0808">Transferase</keyword>
<keyword id="KW-0819">tRNA processing</keyword>
<sequence length="361" mass="41117">MKPSIHSLTHQTMQEWVLEQGEKKFRADQIWEWLYRKRVQSFEEMTNLSKDLIAKLNDQFVVNPLKQGIVQESADGTVKYLFELPDGMLIETVLMCQHYGLSVCVTTQVGCNIGCTFCASGLIKKQRDLNNGEIVAQIMLVQKYFDERGQDERISHIVVMGIGEPFDNYNNVLNFFRTINDDKGMAIGARHITVSISGLAHKIRDFADEGVQVNLAVSLHAPNNELRSSIMKINRAFPIEKLFAAIEYYIETTNRRVTFEYIMLNEVNDGVEQALELAELLKNIKKSSYVNLIPYNPVSEHDQYSRSPKERVLAFYDTLKKKGGNCVVRQEHGTDIDAACGQLLFNTMKRDRQKAVAAVNP</sequence>